<organism>
    <name type="scientific">Ureaplasma parvum serovar 3 (strain ATCC 700970)</name>
    <dbReference type="NCBI Taxonomy" id="273119"/>
    <lineage>
        <taxon>Bacteria</taxon>
        <taxon>Bacillati</taxon>
        <taxon>Mycoplasmatota</taxon>
        <taxon>Mycoplasmoidales</taxon>
        <taxon>Mycoplasmoidaceae</taxon>
        <taxon>Ureaplasma</taxon>
    </lineage>
</organism>
<gene>
    <name evidence="1" type="primary">alaS</name>
    <name type="ordered locus">UU369</name>
</gene>
<name>SYA_UREPA</name>
<feature type="chain" id="PRO_0000075240" description="Alanine--tRNA ligase">
    <location>
        <begin position="1"/>
        <end position="906"/>
    </location>
</feature>
<feature type="binding site" evidence="1">
    <location>
        <position position="570"/>
    </location>
    <ligand>
        <name>Zn(2+)</name>
        <dbReference type="ChEBI" id="CHEBI:29105"/>
    </ligand>
</feature>
<feature type="binding site" evidence="1">
    <location>
        <position position="574"/>
    </location>
    <ligand>
        <name>Zn(2+)</name>
        <dbReference type="ChEBI" id="CHEBI:29105"/>
    </ligand>
</feature>
<feature type="binding site" evidence="1">
    <location>
        <position position="674"/>
    </location>
    <ligand>
        <name>Zn(2+)</name>
        <dbReference type="ChEBI" id="CHEBI:29105"/>
    </ligand>
</feature>
<feature type="binding site" evidence="1">
    <location>
        <position position="678"/>
    </location>
    <ligand>
        <name>Zn(2+)</name>
        <dbReference type="ChEBI" id="CHEBI:29105"/>
    </ligand>
</feature>
<protein>
    <recommendedName>
        <fullName evidence="1">Alanine--tRNA ligase</fullName>
        <ecNumber evidence="1">6.1.1.7</ecNumber>
    </recommendedName>
    <alternativeName>
        <fullName evidence="1">Alanyl-tRNA synthetase</fullName>
        <shortName evidence="1">AlaRS</shortName>
    </alternativeName>
</protein>
<reference key="1">
    <citation type="journal article" date="2000" name="Nature">
        <title>The complete sequence of the mucosal pathogen Ureaplasma urealyticum.</title>
        <authorList>
            <person name="Glass J.I."/>
            <person name="Lefkowitz E.J."/>
            <person name="Glass J.S."/>
            <person name="Heiner C.R."/>
            <person name="Chen E.Y."/>
            <person name="Cassell G.H."/>
        </authorList>
    </citation>
    <scope>NUCLEOTIDE SEQUENCE [LARGE SCALE GENOMIC DNA]</scope>
    <source>
        <strain>ATCC 700970</strain>
    </source>
</reference>
<comment type="function">
    <text evidence="1">Catalyzes the attachment of alanine to tRNA(Ala) in a two-step reaction: alanine is first activated by ATP to form Ala-AMP and then transferred to the acceptor end of tRNA(Ala). Also edits incorrectly charged Ser-tRNA(Ala) and Gly-tRNA(Ala) via its editing domain.</text>
</comment>
<comment type="catalytic activity">
    <reaction evidence="1">
        <text>tRNA(Ala) + L-alanine + ATP = L-alanyl-tRNA(Ala) + AMP + diphosphate</text>
        <dbReference type="Rhea" id="RHEA:12540"/>
        <dbReference type="Rhea" id="RHEA-COMP:9657"/>
        <dbReference type="Rhea" id="RHEA-COMP:9923"/>
        <dbReference type="ChEBI" id="CHEBI:30616"/>
        <dbReference type="ChEBI" id="CHEBI:33019"/>
        <dbReference type="ChEBI" id="CHEBI:57972"/>
        <dbReference type="ChEBI" id="CHEBI:78442"/>
        <dbReference type="ChEBI" id="CHEBI:78497"/>
        <dbReference type="ChEBI" id="CHEBI:456215"/>
        <dbReference type="EC" id="6.1.1.7"/>
    </reaction>
</comment>
<comment type="cofactor">
    <cofactor evidence="1">
        <name>Zn(2+)</name>
        <dbReference type="ChEBI" id="CHEBI:29105"/>
    </cofactor>
    <text evidence="1">Binds 1 zinc ion per subunit.</text>
</comment>
<comment type="subcellular location">
    <subcellularLocation>
        <location evidence="1">Cytoplasm</location>
    </subcellularLocation>
</comment>
<comment type="domain">
    <text evidence="1">Consists of three domains; the N-terminal catalytic domain, the editing domain and the C-terminal C-Ala domain. The editing domain removes incorrectly charged amino acids, while the C-Ala domain, along with tRNA(Ala), serves as a bridge to cooperatively bring together the editing and aminoacylation centers thus stimulating deacylation of misacylated tRNAs.</text>
</comment>
<comment type="similarity">
    <text evidence="1">Belongs to the class-II aminoacyl-tRNA synthetase family.</text>
</comment>
<accession>Q9PQC2</accession>
<keyword id="KW-0030">Aminoacyl-tRNA synthetase</keyword>
<keyword id="KW-0067">ATP-binding</keyword>
<keyword id="KW-0963">Cytoplasm</keyword>
<keyword id="KW-0436">Ligase</keyword>
<keyword id="KW-0479">Metal-binding</keyword>
<keyword id="KW-0547">Nucleotide-binding</keyword>
<keyword id="KW-0648">Protein biosynthesis</keyword>
<keyword id="KW-1185">Reference proteome</keyword>
<keyword id="KW-0694">RNA-binding</keyword>
<keyword id="KW-0820">tRNA-binding</keyword>
<keyword id="KW-0862">Zinc</keyword>
<evidence type="ECO:0000255" key="1">
    <source>
        <dbReference type="HAMAP-Rule" id="MF_00036"/>
    </source>
</evidence>
<dbReference type="EC" id="6.1.1.7" evidence="1"/>
<dbReference type="EMBL" id="AF222894">
    <property type="protein sequence ID" value="AAF30778.1"/>
    <property type="molecule type" value="Genomic_DNA"/>
</dbReference>
<dbReference type="RefSeq" id="WP_006689116.1">
    <property type="nucleotide sequence ID" value="NC_002162.1"/>
</dbReference>
<dbReference type="SMR" id="Q9PQC2"/>
<dbReference type="STRING" id="273119.UU369"/>
<dbReference type="EnsemblBacteria" id="AAF30778">
    <property type="protein sequence ID" value="AAF30778"/>
    <property type="gene ID" value="UU369"/>
</dbReference>
<dbReference type="GeneID" id="29672461"/>
<dbReference type="KEGG" id="uur:UU369"/>
<dbReference type="eggNOG" id="COG0013">
    <property type="taxonomic scope" value="Bacteria"/>
</dbReference>
<dbReference type="HOGENOM" id="CLU_004485_1_1_14"/>
<dbReference type="OrthoDB" id="9803884at2"/>
<dbReference type="Proteomes" id="UP000000423">
    <property type="component" value="Chromosome"/>
</dbReference>
<dbReference type="GO" id="GO:0005829">
    <property type="term" value="C:cytosol"/>
    <property type="evidence" value="ECO:0007669"/>
    <property type="project" value="TreeGrafter"/>
</dbReference>
<dbReference type="GO" id="GO:0004813">
    <property type="term" value="F:alanine-tRNA ligase activity"/>
    <property type="evidence" value="ECO:0007669"/>
    <property type="project" value="UniProtKB-UniRule"/>
</dbReference>
<dbReference type="GO" id="GO:0002161">
    <property type="term" value="F:aminoacyl-tRNA deacylase activity"/>
    <property type="evidence" value="ECO:0007669"/>
    <property type="project" value="TreeGrafter"/>
</dbReference>
<dbReference type="GO" id="GO:0005524">
    <property type="term" value="F:ATP binding"/>
    <property type="evidence" value="ECO:0007669"/>
    <property type="project" value="UniProtKB-UniRule"/>
</dbReference>
<dbReference type="GO" id="GO:0000049">
    <property type="term" value="F:tRNA binding"/>
    <property type="evidence" value="ECO:0007669"/>
    <property type="project" value="UniProtKB-KW"/>
</dbReference>
<dbReference type="GO" id="GO:0008270">
    <property type="term" value="F:zinc ion binding"/>
    <property type="evidence" value="ECO:0007669"/>
    <property type="project" value="UniProtKB-UniRule"/>
</dbReference>
<dbReference type="GO" id="GO:0006419">
    <property type="term" value="P:alanyl-tRNA aminoacylation"/>
    <property type="evidence" value="ECO:0007669"/>
    <property type="project" value="UniProtKB-UniRule"/>
</dbReference>
<dbReference type="CDD" id="cd00673">
    <property type="entry name" value="AlaRS_core"/>
    <property type="match status" value="1"/>
</dbReference>
<dbReference type="FunFam" id="3.30.930.10:FF:000046">
    <property type="entry name" value="Alanine--tRNA ligase"/>
    <property type="match status" value="1"/>
</dbReference>
<dbReference type="FunFam" id="3.30.980.10:FF:000004">
    <property type="entry name" value="Alanine--tRNA ligase, cytoplasmic"/>
    <property type="match status" value="1"/>
</dbReference>
<dbReference type="Gene3D" id="2.40.30.130">
    <property type="match status" value="1"/>
</dbReference>
<dbReference type="Gene3D" id="3.10.310.40">
    <property type="match status" value="1"/>
</dbReference>
<dbReference type="Gene3D" id="3.30.54.20">
    <property type="match status" value="1"/>
</dbReference>
<dbReference type="Gene3D" id="3.30.930.10">
    <property type="entry name" value="Bira Bifunctional Protein, Domain 2"/>
    <property type="match status" value="1"/>
</dbReference>
<dbReference type="Gene3D" id="3.30.980.10">
    <property type="entry name" value="Threonyl-trna Synthetase, Chain A, domain 2"/>
    <property type="match status" value="1"/>
</dbReference>
<dbReference type="HAMAP" id="MF_00036_B">
    <property type="entry name" value="Ala_tRNA_synth_B"/>
    <property type="match status" value="1"/>
</dbReference>
<dbReference type="InterPro" id="IPR045864">
    <property type="entry name" value="aa-tRNA-synth_II/BPL/LPL"/>
</dbReference>
<dbReference type="InterPro" id="IPR002318">
    <property type="entry name" value="Ala-tRNA-lgiase_IIc"/>
</dbReference>
<dbReference type="InterPro" id="IPR018162">
    <property type="entry name" value="Ala-tRNA-ligase_IIc_anticod-bd"/>
</dbReference>
<dbReference type="InterPro" id="IPR018165">
    <property type="entry name" value="Ala-tRNA-synth_IIc_core"/>
</dbReference>
<dbReference type="InterPro" id="IPR018164">
    <property type="entry name" value="Ala-tRNA-synth_IIc_N"/>
</dbReference>
<dbReference type="InterPro" id="IPR050058">
    <property type="entry name" value="Ala-tRNA_ligase"/>
</dbReference>
<dbReference type="InterPro" id="IPR023033">
    <property type="entry name" value="Ala_tRNA_ligase_euk/bac"/>
</dbReference>
<dbReference type="InterPro" id="IPR003156">
    <property type="entry name" value="DHHA1_dom"/>
</dbReference>
<dbReference type="InterPro" id="IPR018163">
    <property type="entry name" value="Thr/Ala-tRNA-synth_IIc_edit"/>
</dbReference>
<dbReference type="InterPro" id="IPR009000">
    <property type="entry name" value="Transl_B-barrel_sf"/>
</dbReference>
<dbReference type="InterPro" id="IPR012947">
    <property type="entry name" value="tRNA_SAD"/>
</dbReference>
<dbReference type="NCBIfam" id="TIGR00344">
    <property type="entry name" value="alaS"/>
    <property type="match status" value="1"/>
</dbReference>
<dbReference type="PANTHER" id="PTHR11777:SF9">
    <property type="entry name" value="ALANINE--TRNA LIGASE, CYTOPLASMIC"/>
    <property type="match status" value="1"/>
</dbReference>
<dbReference type="PANTHER" id="PTHR11777">
    <property type="entry name" value="ALANYL-TRNA SYNTHETASE"/>
    <property type="match status" value="1"/>
</dbReference>
<dbReference type="Pfam" id="PF02272">
    <property type="entry name" value="DHHA1"/>
    <property type="match status" value="1"/>
</dbReference>
<dbReference type="Pfam" id="PF01411">
    <property type="entry name" value="tRNA-synt_2c"/>
    <property type="match status" value="1"/>
</dbReference>
<dbReference type="Pfam" id="PF07973">
    <property type="entry name" value="tRNA_SAD"/>
    <property type="match status" value="1"/>
</dbReference>
<dbReference type="PRINTS" id="PR00980">
    <property type="entry name" value="TRNASYNTHALA"/>
</dbReference>
<dbReference type="SMART" id="SM00863">
    <property type="entry name" value="tRNA_SAD"/>
    <property type="match status" value="1"/>
</dbReference>
<dbReference type="SUPFAM" id="SSF55681">
    <property type="entry name" value="Class II aaRS and biotin synthetases"/>
    <property type="match status" value="1"/>
</dbReference>
<dbReference type="SUPFAM" id="SSF101353">
    <property type="entry name" value="Putative anticodon-binding domain of alanyl-tRNA synthetase (AlaRS)"/>
    <property type="match status" value="1"/>
</dbReference>
<dbReference type="SUPFAM" id="SSF55186">
    <property type="entry name" value="ThrRS/AlaRS common domain"/>
    <property type="match status" value="1"/>
</dbReference>
<dbReference type="SUPFAM" id="SSF50447">
    <property type="entry name" value="Translation proteins"/>
    <property type="match status" value="1"/>
</dbReference>
<dbReference type="PROSITE" id="PS50860">
    <property type="entry name" value="AA_TRNA_LIGASE_II_ALA"/>
    <property type="match status" value="1"/>
</dbReference>
<proteinExistence type="inferred from homology"/>
<sequence>MLKLSTNEIRKKWIEFFESKDHLFIEPKSLIPKNDPTLLWINSGVSTLKDYFSGKVKPPHKRLVNSQKAIRTNDIFNVGLTSRHHTFFEMLGNFSIGDYFKKEAIDWAYEFLINVLKIDVKKLWVTVFEDDQFTNDEWIKLGIIKEQIIKCNRDRNFWDVGNGPCGPCTEIHYDRGERFDPNKIGSKLILEDIENDRYVEIWNIVFSQFNNDGHNNYTELLQKNIDTGAGLERIACISQDVPTNFDSDVFMRITKSVEQFSEYKYDMNEYFHPNVTQNKINFAYKVIADHMRATVFAIADGAIPSNKERGYILRRLIRRTMVLVRRLNINNLLWVDAVVDAIASTMGDFYTYLKDEKTLTKIKMILNKEVQLFEKTLQLGLNIFENSIRNQELDKEITFKLVDTYGFPIELIKEICEQRNVKVDLEAFDAMFKHHQLISKANKANLKVMESQNESLMQLDVDSTFHYEIFRWENAKIITLFNEDFELVDGLDHEDGYVVFDNTCFYATSGGQQHDTGYIIKNDQQFFVDDVFKAPNRQHVHHVKNASLSMNEHVILQINEQDRKSITANHTAEHLLHYCLKHVLSPDIKQEGAAKYPHKVTFDFTYHAQPTKAQLDKLENVLNEMVQSNFDVQELHMDLDEAKAVGAAAYFEDVYKKLKGKLRVIKMGPSIELCGGTHAHHTSEIERIKIVECASKGAGSWRITMVTGHDNLAKYIHDLYVDYLNEINHLKVNLDINDHKLNDLYNAFANWKNLSIDDYDLLNEKFAELKQSLINFKIEFDKQNAKQAIIDIKNTFNTQLTNKRVHVFKNTDNKNIFNALNELINENQDTLFISFNLDDNKIQYLLAINEKFATTNQINLNKYIKELNTISNGKGGGKPYFVQGGTSEQEKLDELLTVVDKWVINA</sequence>